<proteinExistence type="inferred from homology"/>
<feature type="chain" id="PRO_1000001693" description="UPF0758 protein Sfri_3828">
    <location>
        <begin position="1"/>
        <end position="225"/>
    </location>
</feature>
<feature type="domain" description="MPN" evidence="1">
    <location>
        <begin position="102"/>
        <end position="224"/>
    </location>
</feature>
<feature type="short sequence motif" description="JAMM motif" evidence="1">
    <location>
        <begin position="173"/>
        <end position="186"/>
    </location>
</feature>
<feature type="binding site" evidence="1">
    <location>
        <position position="173"/>
    </location>
    <ligand>
        <name>Zn(2+)</name>
        <dbReference type="ChEBI" id="CHEBI:29105"/>
        <note>catalytic</note>
    </ligand>
</feature>
<feature type="binding site" evidence="1">
    <location>
        <position position="175"/>
    </location>
    <ligand>
        <name>Zn(2+)</name>
        <dbReference type="ChEBI" id="CHEBI:29105"/>
        <note>catalytic</note>
    </ligand>
</feature>
<feature type="binding site" evidence="1">
    <location>
        <position position="186"/>
    </location>
    <ligand>
        <name>Zn(2+)</name>
        <dbReference type="ChEBI" id="CHEBI:29105"/>
        <note>catalytic</note>
    </ligand>
</feature>
<evidence type="ECO:0000255" key="1">
    <source>
        <dbReference type="PROSITE-ProRule" id="PRU01182"/>
    </source>
</evidence>
<evidence type="ECO:0000305" key="2"/>
<dbReference type="EMBL" id="CP000447">
    <property type="protein sequence ID" value="ABI73653.1"/>
    <property type="molecule type" value="Genomic_DNA"/>
</dbReference>
<dbReference type="RefSeq" id="WP_011639237.1">
    <property type="nucleotide sequence ID" value="NC_008345.1"/>
</dbReference>
<dbReference type="SMR" id="Q07WG1"/>
<dbReference type="STRING" id="318167.Sfri_3828"/>
<dbReference type="KEGG" id="sfr:Sfri_3828"/>
<dbReference type="eggNOG" id="COG2003">
    <property type="taxonomic scope" value="Bacteria"/>
</dbReference>
<dbReference type="HOGENOM" id="CLU_073529_0_1_6"/>
<dbReference type="OrthoDB" id="9804482at2"/>
<dbReference type="Proteomes" id="UP000000684">
    <property type="component" value="Chromosome"/>
</dbReference>
<dbReference type="GO" id="GO:0046872">
    <property type="term" value="F:metal ion binding"/>
    <property type="evidence" value="ECO:0007669"/>
    <property type="project" value="UniProtKB-KW"/>
</dbReference>
<dbReference type="GO" id="GO:0008237">
    <property type="term" value="F:metallopeptidase activity"/>
    <property type="evidence" value="ECO:0007669"/>
    <property type="project" value="UniProtKB-KW"/>
</dbReference>
<dbReference type="GO" id="GO:0006508">
    <property type="term" value="P:proteolysis"/>
    <property type="evidence" value="ECO:0007669"/>
    <property type="project" value="UniProtKB-KW"/>
</dbReference>
<dbReference type="CDD" id="cd08071">
    <property type="entry name" value="MPN_DUF2466"/>
    <property type="match status" value="1"/>
</dbReference>
<dbReference type="FunFam" id="3.40.140.10:FF:000032">
    <property type="entry name" value="DNA repair protein RadC"/>
    <property type="match status" value="1"/>
</dbReference>
<dbReference type="Gene3D" id="3.40.140.10">
    <property type="entry name" value="Cytidine Deaminase, domain 2"/>
    <property type="match status" value="1"/>
</dbReference>
<dbReference type="InterPro" id="IPR037518">
    <property type="entry name" value="MPN"/>
</dbReference>
<dbReference type="InterPro" id="IPR025657">
    <property type="entry name" value="RadC_JAB"/>
</dbReference>
<dbReference type="InterPro" id="IPR010994">
    <property type="entry name" value="RuvA_2-like"/>
</dbReference>
<dbReference type="InterPro" id="IPR001405">
    <property type="entry name" value="UPF0758"/>
</dbReference>
<dbReference type="InterPro" id="IPR020891">
    <property type="entry name" value="UPF0758_CS"/>
</dbReference>
<dbReference type="InterPro" id="IPR046778">
    <property type="entry name" value="UPF0758_N"/>
</dbReference>
<dbReference type="NCBIfam" id="NF000642">
    <property type="entry name" value="PRK00024.1"/>
    <property type="match status" value="1"/>
</dbReference>
<dbReference type="NCBIfam" id="TIGR00608">
    <property type="entry name" value="radc"/>
    <property type="match status" value="1"/>
</dbReference>
<dbReference type="PANTHER" id="PTHR30471">
    <property type="entry name" value="DNA REPAIR PROTEIN RADC"/>
    <property type="match status" value="1"/>
</dbReference>
<dbReference type="PANTHER" id="PTHR30471:SF3">
    <property type="entry name" value="UPF0758 PROTEIN YEES-RELATED"/>
    <property type="match status" value="1"/>
</dbReference>
<dbReference type="Pfam" id="PF04002">
    <property type="entry name" value="RadC"/>
    <property type="match status" value="1"/>
</dbReference>
<dbReference type="Pfam" id="PF20582">
    <property type="entry name" value="UPF0758_N"/>
    <property type="match status" value="1"/>
</dbReference>
<dbReference type="SUPFAM" id="SSF102712">
    <property type="entry name" value="JAB1/MPN domain"/>
    <property type="match status" value="1"/>
</dbReference>
<dbReference type="SUPFAM" id="SSF47781">
    <property type="entry name" value="RuvA domain 2-like"/>
    <property type="match status" value="1"/>
</dbReference>
<dbReference type="PROSITE" id="PS50249">
    <property type="entry name" value="MPN"/>
    <property type="match status" value="1"/>
</dbReference>
<dbReference type="PROSITE" id="PS01302">
    <property type="entry name" value="UPF0758"/>
    <property type="match status" value="1"/>
</dbReference>
<sequence>MGIKDWPQGEGPREKLLLKGAGHLSDAELLAVILRNGLAGQNAVDLARNMINQFGGLRSLLSASKSQVCKLAGVGPVKYAQLQAAVEISKRIAHENLQRGQILTNPDLTRDYLMRQLADRSYEVFALLLLDTQHRVIQFVELFRGTIDSASVYPREVVSLVLEKKAAAVIVCHNHPSGIAEPSQADRRITERIKNALATIDVSLLDHMVVGDQEIVSFAERGWIV</sequence>
<gene>
    <name type="ordered locus">Sfri_3828</name>
</gene>
<keyword id="KW-0378">Hydrolase</keyword>
<keyword id="KW-0479">Metal-binding</keyword>
<keyword id="KW-0482">Metalloprotease</keyword>
<keyword id="KW-0645">Protease</keyword>
<keyword id="KW-1185">Reference proteome</keyword>
<keyword id="KW-0862">Zinc</keyword>
<organism>
    <name type="scientific">Shewanella frigidimarina (strain NCIMB 400)</name>
    <dbReference type="NCBI Taxonomy" id="318167"/>
    <lineage>
        <taxon>Bacteria</taxon>
        <taxon>Pseudomonadati</taxon>
        <taxon>Pseudomonadota</taxon>
        <taxon>Gammaproteobacteria</taxon>
        <taxon>Alteromonadales</taxon>
        <taxon>Shewanellaceae</taxon>
        <taxon>Shewanella</taxon>
    </lineage>
</organism>
<accession>Q07WG1</accession>
<comment type="similarity">
    <text evidence="2">Belongs to the UPF0758 family.</text>
</comment>
<name>Y3828_SHEFN</name>
<reference key="1">
    <citation type="submission" date="2006-08" db="EMBL/GenBank/DDBJ databases">
        <title>Complete sequence of Shewanella frigidimarina NCIMB 400.</title>
        <authorList>
            <consortium name="US DOE Joint Genome Institute"/>
            <person name="Copeland A."/>
            <person name="Lucas S."/>
            <person name="Lapidus A."/>
            <person name="Barry K."/>
            <person name="Detter J.C."/>
            <person name="Glavina del Rio T."/>
            <person name="Hammon N."/>
            <person name="Israni S."/>
            <person name="Dalin E."/>
            <person name="Tice H."/>
            <person name="Pitluck S."/>
            <person name="Fredrickson J.K."/>
            <person name="Kolker E."/>
            <person name="McCuel L.A."/>
            <person name="DiChristina T."/>
            <person name="Nealson K.H."/>
            <person name="Newman D."/>
            <person name="Tiedje J.M."/>
            <person name="Zhou J."/>
            <person name="Romine M.F."/>
            <person name="Culley D.E."/>
            <person name="Serres M."/>
            <person name="Chertkov O."/>
            <person name="Brettin T."/>
            <person name="Bruce D."/>
            <person name="Han C."/>
            <person name="Tapia R."/>
            <person name="Gilna P."/>
            <person name="Schmutz J."/>
            <person name="Larimer F."/>
            <person name="Land M."/>
            <person name="Hauser L."/>
            <person name="Kyrpides N."/>
            <person name="Mikhailova N."/>
            <person name="Richardson P."/>
        </authorList>
    </citation>
    <scope>NUCLEOTIDE SEQUENCE [LARGE SCALE GENOMIC DNA]</scope>
    <source>
        <strain>NCIMB 400</strain>
    </source>
</reference>
<protein>
    <recommendedName>
        <fullName>UPF0758 protein Sfri_3828</fullName>
    </recommendedName>
</protein>